<proteinExistence type="evidence at protein level"/>
<organism>
    <name type="scientific">Streptomyces chartreusis</name>
    <dbReference type="NCBI Taxonomy" id="1969"/>
    <lineage>
        <taxon>Bacteria</taxon>
        <taxon>Bacillati</taxon>
        <taxon>Actinomycetota</taxon>
        <taxon>Actinomycetes</taxon>
        <taxon>Kitasatosporales</taxon>
        <taxon>Streptomycetaceae</taxon>
        <taxon>Streptomyces</taxon>
    </lineage>
</organism>
<keyword id="KW-0119">Carbohydrate metabolism</keyword>
<keyword id="KW-0903">Direct protein sequencing</keyword>
<keyword id="KW-0326">Glycosidase</keyword>
<keyword id="KW-0378">Hydrolase</keyword>
<keyword id="KW-0964">Secreted</keyword>
<keyword id="KW-0732">Signal</keyword>
<comment type="function">
    <text evidence="2">Involved in the degradation of arabinan and is a key enzyme in the complete degradation of the plant cell wall. Catalyzes only the cleavage of terminal alpha-(1-&gt;5) arabinofuranosyl bonds of arabinan present in the arabinofuranosyl polysaccharides or oligosaccharides. It cannot act on other arabinose-containing polysaccharides and arabinoxylo-oligosaccharides.</text>
</comment>
<comment type="catalytic activity">
    <reaction evidence="2">
        <text>Hydrolysis of terminal non-reducing alpha-L-arabinofuranoside residues in alpha-L-arabinosides.</text>
        <dbReference type="EC" id="3.2.1.55"/>
    </reaction>
</comment>
<comment type="biophysicochemical properties">
    <phDependence>
        <text evidence="2">Optimum pH is 7.0. The enzyme is slowly inactivated above pH 9 and below pH 5.</text>
    </phDependence>
    <temperatureDependence>
        <text evidence="2">Optimum temperature is 50 degrees Celsius. The enzyme is inactivated at temperatures above 40 degrees Celsius.</text>
    </temperatureDependence>
</comment>
<comment type="pathway">
    <text>Glycan metabolism; L-arabinan degradation.</text>
</comment>
<comment type="subcellular location">
    <subcellularLocation>
        <location>Secreted</location>
    </subcellularLocation>
</comment>
<comment type="PTM">
    <text>Predicted to be exported by the Tat system. The position of the signal peptide cleavage has been experimentally proven.</text>
</comment>
<comment type="similarity">
    <text evidence="3">Belongs to the glycosyl hydrolase 43 family.</text>
</comment>
<name>IABF_STRCX</name>
<evidence type="ECO:0000250" key="1">
    <source>
        <dbReference type="UniProtKB" id="Q82P90"/>
    </source>
</evidence>
<evidence type="ECO:0000269" key="2">
    <source>
    </source>
</evidence>
<evidence type="ECO:0000305" key="3"/>
<accession>P82594</accession>
<feature type="signal peptide" description="Tat-tyPE signal" evidence="2">
    <location>
        <begin position="1"/>
        <end position="43"/>
    </location>
</feature>
<feature type="chain" id="PRO_0000012203" description="Extracellular exo-alpha-(1-&gt;5)-L-arabinofuranosidase">
    <location>
        <begin position="44"/>
        <end position="328"/>
    </location>
</feature>
<feature type="active site" description="Proton acceptor" evidence="1">
    <location>
        <position position="60"/>
    </location>
</feature>
<feature type="active site" description="Proton donor" evidence="1">
    <location>
        <position position="236"/>
    </location>
</feature>
<feature type="site" description="Important for catalytic activity, responsible for pKa modulation of the active site Glu and correct orientation of both the proton donor and substrate" evidence="1">
    <location>
        <position position="175"/>
    </location>
</feature>
<sequence length="328" mass="36774">MCTREAVRMSREHDLPEIPSRRLLLKGAAAAGALTAVPGVAHAAPRPAPYENPLVRQRADPHIHRHTDGRYYFTATAPEYDRIVLRRSRTLGGLSTAAESVIWRAHPTGDMAAHIWAPELHRIGGKWYVYFAAAPAEDVWRIRIWVLENSHPDPFKGTWEEKGQVRTAWETFSLDATTFTHRGARYLCWAQHEPGADNNTGLFLSEMANPWTLTGPQIRLSTPEYDWECVGYKVNEGPYALKRNGRIFLTYSASATDHHYCVGMFTADAGGNLMDPGNWSKSPIPVFTGNETTKQYGPGHNCFTVAEDGRSDVLVYHARQYKEIVGDP</sequence>
<reference key="1">
    <citation type="journal article" date="2000" name="Biochem. J.">
        <title>Purification, characterization and gene cloning of two alpha-L-arabinofuranosidases from Streptomyces chartreusis GS901.</title>
        <authorList>
            <person name="Matsuo N."/>
            <person name="Kaneko S."/>
            <person name="Kuno A."/>
            <person name="Kobayashi H."/>
            <person name="Kusakabe I."/>
        </authorList>
    </citation>
    <scope>NUCLEOTIDE SEQUENCE [GENOMIC DNA]</scope>
    <scope>PROTEIN SEQUENCE OF 44-72</scope>
    <scope>FUNCTION</scope>
    <scope>CATALYTIC ACTIVITY</scope>
    <scope>BIOPHYSICOCHEMICAL PROPERTIES</scope>
    <scope>SUBSTRATE SPECIFICITY</scope>
    <source>
        <strain>GS901</strain>
    </source>
</reference>
<protein>
    <recommendedName>
        <fullName>Extracellular exo-alpha-(1-&gt;5)-L-arabinofuranosidase</fullName>
        <shortName>ABF</shortName>
        <ecNumber>3.2.1.55</ecNumber>
    </recommendedName>
    <alternativeName>
        <fullName>Alpha-L-AFase</fullName>
    </alternativeName>
    <alternativeName>
        <fullName>Extracellular arabinan exo-alpha-(1-&gt;5)-L-arabinosidase</fullName>
        <shortName>Arabinosidase</shortName>
    </alternativeName>
</protein>
<dbReference type="EC" id="3.2.1.55"/>
<dbReference type="EMBL" id="AB023626">
    <property type="protein sequence ID" value="BAA90772.1"/>
    <property type="molecule type" value="Genomic_DNA"/>
</dbReference>
<dbReference type="PIR" id="B59296">
    <property type="entry name" value="B59296"/>
</dbReference>
<dbReference type="SMR" id="P82594"/>
<dbReference type="CAZy" id="GH43">
    <property type="family name" value="Glycoside Hydrolase Family 43"/>
</dbReference>
<dbReference type="UniPathway" id="UPA00667"/>
<dbReference type="GO" id="GO:0005576">
    <property type="term" value="C:extracellular region"/>
    <property type="evidence" value="ECO:0007669"/>
    <property type="project" value="UniProtKB-SubCell"/>
</dbReference>
<dbReference type="GO" id="GO:0046556">
    <property type="term" value="F:alpha-L-arabinofuranosidase activity"/>
    <property type="evidence" value="ECO:0007669"/>
    <property type="project" value="UniProtKB-EC"/>
</dbReference>
<dbReference type="GO" id="GO:0031222">
    <property type="term" value="P:arabinan catabolic process"/>
    <property type="evidence" value="ECO:0007669"/>
    <property type="project" value="UniProtKB-UniPathway"/>
</dbReference>
<dbReference type="CDD" id="cd18817">
    <property type="entry name" value="GH43f_LbAraf43-like"/>
    <property type="match status" value="1"/>
</dbReference>
<dbReference type="Gene3D" id="2.115.10.20">
    <property type="entry name" value="Glycosyl hydrolase domain, family 43"/>
    <property type="match status" value="1"/>
</dbReference>
<dbReference type="InterPro" id="IPR016828">
    <property type="entry name" value="Alpha-L-arabinofuranosidase"/>
</dbReference>
<dbReference type="InterPro" id="IPR006710">
    <property type="entry name" value="Glyco_hydro_43"/>
</dbReference>
<dbReference type="InterPro" id="IPR023296">
    <property type="entry name" value="Glyco_hydro_beta-prop_sf"/>
</dbReference>
<dbReference type="InterPro" id="IPR006311">
    <property type="entry name" value="TAT_signal"/>
</dbReference>
<dbReference type="PANTHER" id="PTHR43817">
    <property type="entry name" value="GLYCOSYL HYDROLASE"/>
    <property type="match status" value="1"/>
</dbReference>
<dbReference type="PANTHER" id="PTHR43817:SF1">
    <property type="entry name" value="HYDROLASE, FAMILY 43, PUTATIVE (AFU_ORTHOLOGUE AFUA_3G01660)-RELATED"/>
    <property type="match status" value="1"/>
</dbReference>
<dbReference type="Pfam" id="PF04616">
    <property type="entry name" value="Glyco_hydro_43"/>
    <property type="match status" value="1"/>
</dbReference>
<dbReference type="PIRSF" id="PIRSF025414">
    <property type="entry name" value="Alpha-L-arabinofuranosidase"/>
    <property type="match status" value="1"/>
</dbReference>
<dbReference type="SUPFAM" id="SSF75005">
    <property type="entry name" value="Arabinanase/levansucrase/invertase"/>
    <property type="match status" value="1"/>
</dbReference>
<dbReference type="PROSITE" id="PS51318">
    <property type="entry name" value="TAT"/>
    <property type="match status" value="1"/>
</dbReference>